<gene>
    <name evidence="5" type="primary">CYP128</name>
    <name evidence="5" type="synonym">CYP5139D2</name>
</gene>
<proteinExistence type="evidence at protein level"/>
<keyword id="KW-0325">Glycoprotein</keyword>
<keyword id="KW-0349">Heme</keyword>
<keyword id="KW-0408">Iron</keyword>
<keyword id="KW-0472">Membrane</keyword>
<keyword id="KW-0479">Metal-binding</keyword>
<keyword id="KW-0503">Monooxygenase</keyword>
<keyword id="KW-0560">Oxidoreductase</keyword>
<keyword id="KW-0812">Transmembrane</keyword>
<keyword id="KW-1133">Transmembrane helix</keyword>
<sequence>MLSLTAHDIPWAAGATLLAWAAYKIGRILLLPYTSPLRGLPGPPASSWLFGNVNELMGTEDFALYSEWLEKYGPTMKLNSWFKIPKLFTIDTRAMNYVLSHSQEYPKPERSRHNLVQILGNGLVVAEGELHRRERRIMNPAFGPAQIRELTEIFVEKSQQLRDIWWNDVAIRGGSARIDIQSGLTKMTLDVIGLAGFNYEFNALNPDGKPNELNAAFEVMFEYLSNLRKSYWLIIRSRFPILRCIPDGYSRRTAAAHKVTRRIGLQLIAEKKAALKQMAQSGEKTAGTALKSRDLLTLLIKANTSPDIPEDQRLSDEDVLAQVPTFLVAGHETTSNATTWCLYALAQRLDVQRKLREELREVPVDNPSMDQLNALPYLDAVIRETMRLYPPVVAGIRIASKDDEIPLAVPYMDAHGRMHDTVRIDKGTTFPIPILGVNMSKALWGEDAREFKPERWESVPEAVQPIPGVWSNLMTFIGGPRACIGYRFSLVEMKALIFTLVRAFEFEMAVPIEDITRKIGLVQRPFVRSEMEKGTQMPLIVKQHVRL</sequence>
<dbReference type="EC" id="1.-.-.-" evidence="4"/>
<dbReference type="EMBL" id="AB573327">
    <property type="protein sequence ID" value="BAK09460.1"/>
    <property type="molecule type" value="mRNA"/>
</dbReference>
<dbReference type="SMR" id="F1SYB6"/>
<dbReference type="GlyCosmos" id="F1SYB6">
    <property type="glycosylation" value="2 sites, No reported glycans"/>
</dbReference>
<dbReference type="GO" id="GO:0016020">
    <property type="term" value="C:membrane"/>
    <property type="evidence" value="ECO:0007669"/>
    <property type="project" value="UniProtKB-SubCell"/>
</dbReference>
<dbReference type="GO" id="GO:0020037">
    <property type="term" value="F:heme binding"/>
    <property type="evidence" value="ECO:0007669"/>
    <property type="project" value="InterPro"/>
</dbReference>
<dbReference type="GO" id="GO:0005506">
    <property type="term" value="F:iron ion binding"/>
    <property type="evidence" value="ECO:0007669"/>
    <property type="project" value="InterPro"/>
</dbReference>
<dbReference type="GO" id="GO:0004497">
    <property type="term" value="F:monooxygenase activity"/>
    <property type="evidence" value="ECO:0007669"/>
    <property type="project" value="UniProtKB-KW"/>
</dbReference>
<dbReference type="GO" id="GO:0016705">
    <property type="term" value="F:oxidoreductase activity, acting on paired donors, with incorporation or reduction of molecular oxygen"/>
    <property type="evidence" value="ECO:0007669"/>
    <property type="project" value="InterPro"/>
</dbReference>
<dbReference type="CDD" id="cd11069">
    <property type="entry name" value="CYP_FUM15-like"/>
    <property type="match status" value="1"/>
</dbReference>
<dbReference type="Gene3D" id="1.10.630.10">
    <property type="entry name" value="Cytochrome P450"/>
    <property type="match status" value="1"/>
</dbReference>
<dbReference type="InterPro" id="IPR001128">
    <property type="entry name" value="Cyt_P450"/>
</dbReference>
<dbReference type="InterPro" id="IPR002403">
    <property type="entry name" value="Cyt_P450_E_grp-IV"/>
</dbReference>
<dbReference type="InterPro" id="IPR036396">
    <property type="entry name" value="Cyt_P450_sf"/>
</dbReference>
<dbReference type="InterPro" id="IPR050121">
    <property type="entry name" value="Cytochrome_P450_monoxygenase"/>
</dbReference>
<dbReference type="PANTHER" id="PTHR24305">
    <property type="entry name" value="CYTOCHROME P450"/>
    <property type="match status" value="1"/>
</dbReference>
<dbReference type="PANTHER" id="PTHR24305:SF166">
    <property type="entry name" value="CYTOCHROME P450 12A4, MITOCHONDRIAL-RELATED"/>
    <property type="match status" value="1"/>
</dbReference>
<dbReference type="Pfam" id="PF00067">
    <property type="entry name" value="p450"/>
    <property type="match status" value="1"/>
</dbReference>
<dbReference type="PRINTS" id="PR00465">
    <property type="entry name" value="EP450IV"/>
</dbReference>
<dbReference type="PRINTS" id="PR00385">
    <property type="entry name" value="P450"/>
</dbReference>
<dbReference type="SUPFAM" id="SSF48264">
    <property type="entry name" value="Cytochrome P450"/>
    <property type="match status" value="1"/>
</dbReference>
<reference key="1">
    <citation type="journal article" date="2012" name="Arch. Microbiol.">
        <title>Molecular identification and functional characterization of cytochrome P450 monooxygenases from the brown-rot basidiomycete Postia placenta.</title>
        <authorList>
            <person name="Ide M."/>
            <person name="Ichinose H."/>
            <person name="Wariishi H."/>
        </authorList>
    </citation>
    <scope>NUCLEOTIDE SEQUENCE [MRNA]</scope>
    <scope>IDENTIFICATION</scope>
    <scope>FUNCTION</scope>
    <scope>CATALYTIC ACTIVITY</scope>
    <source>
        <strain>ATCC 44394 / Madison 698-R</strain>
    </source>
</reference>
<evidence type="ECO:0000250" key="1">
    <source>
        <dbReference type="UniProtKB" id="P04798"/>
    </source>
</evidence>
<evidence type="ECO:0000255" key="2"/>
<evidence type="ECO:0000255" key="3">
    <source>
        <dbReference type="PROSITE-ProRule" id="PRU00498"/>
    </source>
</evidence>
<evidence type="ECO:0000269" key="4">
    <source>
    </source>
</evidence>
<evidence type="ECO:0000303" key="5">
    <source>
    </source>
</evidence>
<evidence type="ECO:0000305" key="6"/>
<name>CY128_POSPM</name>
<protein>
    <recommendedName>
        <fullName evidence="5">Cytochrome P450 monooxygenase 128</fullName>
        <ecNumber evidence="4">1.-.-.-</ecNumber>
    </recommendedName>
</protein>
<accession>F1SYB6</accession>
<organism>
    <name type="scientific">Postia placenta (strain ATCC 44394 / Madison 698-R)</name>
    <name type="common">Brown rot fungus</name>
    <name type="synonym">Poria monticola</name>
    <dbReference type="NCBI Taxonomy" id="561896"/>
    <lineage>
        <taxon>Eukaryota</taxon>
        <taxon>Fungi</taxon>
        <taxon>Dikarya</taxon>
        <taxon>Basidiomycota</taxon>
        <taxon>Agaricomycotina</taxon>
        <taxon>Agaricomycetes</taxon>
        <taxon>Polyporales</taxon>
        <taxon>Adustoporiaceae</taxon>
        <taxon>Rhodonia</taxon>
    </lineage>
</organism>
<feature type="chain" id="PRO_0000451353" description="Cytochrome P450 monooxygenase 128">
    <location>
        <begin position="1"/>
        <end position="547"/>
    </location>
</feature>
<feature type="transmembrane region" description="Helical" evidence="2">
    <location>
        <begin position="9"/>
        <end position="25"/>
    </location>
</feature>
<feature type="binding site" description="axial binding residue" evidence="1">
    <location>
        <position position="483"/>
    </location>
    <ligand>
        <name>heme</name>
        <dbReference type="ChEBI" id="CHEBI:30413"/>
    </ligand>
    <ligandPart>
        <name>Fe</name>
        <dbReference type="ChEBI" id="CHEBI:18248"/>
    </ligandPart>
</feature>
<feature type="glycosylation site" description="N-linked (GlcNAc...) asparagine" evidence="3">
    <location>
        <position position="336"/>
    </location>
</feature>
<feature type="glycosylation site" description="N-linked (GlcNAc...) asparagine" evidence="3">
    <location>
        <position position="438"/>
    </location>
</feature>
<comment type="function">
    <text evidence="4">Cytochrome P450 monooxygenase that is able to use 7-ethoxycoumarin and testosterone as substrates for oxidation.</text>
</comment>
<comment type="cofactor">
    <cofactor evidence="1">
        <name>heme</name>
        <dbReference type="ChEBI" id="CHEBI:30413"/>
    </cofactor>
</comment>
<comment type="pathway">
    <text evidence="6">Secondary metabolite biosynthesis.</text>
</comment>
<comment type="subcellular location">
    <subcellularLocation>
        <location evidence="2">Membrane</location>
        <topology evidence="2">Single-pass membrane protein</topology>
    </subcellularLocation>
</comment>
<comment type="similarity">
    <text evidence="6">Belongs to the cytochrome P450 family.</text>
</comment>